<evidence type="ECO:0000255" key="1">
    <source>
        <dbReference type="HAMAP-Rule" id="MF_00006"/>
    </source>
</evidence>
<keyword id="KW-0028">Amino-acid biosynthesis</keyword>
<keyword id="KW-0055">Arginine biosynthesis</keyword>
<keyword id="KW-0963">Cytoplasm</keyword>
<keyword id="KW-0456">Lyase</keyword>
<feature type="chain" id="PRO_1000089076" description="Argininosuccinate lyase">
    <location>
        <begin position="1"/>
        <end position="440"/>
    </location>
</feature>
<protein>
    <recommendedName>
        <fullName evidence="1">Argininosuccinate lyase</fullName>
        <shortName evidence="1">ASAL</shortName>
        <ecNumber evidence="1">4.3.2.1</ecNumber>
    </recommendedName>
    <alternativeName>
        <fullName evidence="1">Arginosuccinase</fullName>
    </alternativeName>
</protein>
<reference key="1">
    <citation type="journal article" date="2007" name="PLoS ONE">
        <title>Analysis of the neurotoxin complex genes in Clostridium botulinum A1-A4 and B1 strains: BoNT/A3, /Ba4 and /B1 clusters are located within plasmids.</title>
        <authorList>
            <person name="Smith T.J."/>
            <person name="Hill K.K."/>
            <person name="Foley B.T."/>
            <person name="Detter J.C."/>
            <person name="Munk A.C."/>
            <person name="Bruce D.C."/>
            <person name="Doggett N.A."/>
            <person name="Smith L.A."/>
            <person name="Marks J.D."/>
            <person name="Xie G."/>
            <person name="Brettin T.S."/>
        </authorList>
    </citation>
    <scope>NUCLEOTIDE SEQUENCE [LARGE SCALE GENOMIC DNA]</scope>
    <source>
        <strain>Okra / Type B1</strain>
    </source>
</reference>
<organism>
    <name type="scientific">Clostridium botulinum (strain Okra / Type B1)</name>
    <dbReference type="NCBI Taxonomy" id="498213"/>
    <lineage>
        <taxon>Bacteria</taxon>
        <taxon>Bacillati</taxon>
        <taxon>Bacillota</taxon>
        <taxon>Clostridia</taxon>
        <taxon>Eubacteriales</taxon>
        <taxon>Clostridiaceae</taxon>
        <taxon>Clostridium</taxon>
    </lineage>
</organism>
<name>ARLY_CLOBK</name>
<comment type="catalytic activity">
    <reaction evidence="1">
        <text>2-(N(omega)-L-arginino)succinate = fumarate + L-arginine</text>
        <dbReference type="Rhea" id="RHEA:24020"/>
        <dbReference type="ChEBI" id="CHEBI:29806"/>
        <dbReference type="ChEBI" id="CHEBI:32682"/>
        <dbReference type="ChEBI" id="CHEBI:57472"/>
        <dbReference type="EC" id="4.3.2.1"/>
    </reaction>
</comment>
<comment type="pathway">
    <text evidence="1">Amino-acid biosynthesis; L-arginine biosynthesis; L-arginine from L-ornithine and carbamoyl phosphate: step 3/3.</text>
</comment>
<comment type="subcellular location">
    <subcellularLocation>
        <location evidence="1">Cytoplasm</location>
    </subcellularLocation>
</comment>
<comment type="similarity">
    <text evidence="1">Belongs to the lyase 1 family. Argininosuccinate lyase subfamily.</text>
</comment>
<dbReference type="EC" id="4.3.2.1" evidence="1"/>
<dbReference type="EMBL" id="CP000939">
    <property type="protein sequence ID" value="ACA46282.1"/>
    <property type="molecule type" value="Genomic_DNA"/>
</dbReference>
<dbReference type="RefSeq" id="WP_003404558.1">
    <property type="nucleotide sequence ID" value="NC_010516.1"/>
</dbReference>
<dbReference type="SMR" id="B1IK07"/>
<dbReference type="KEGG" id="cbb:CLD_1895"/>
<dbReference type="HOGENOM" id="CLU_027272_2_3_9"/>
<dbReference type="UniPathway" id="UPA00068">
    <property type="reaction ID" value="UER00114"/>
</dbReference>
<dbReference type="Proteomes" id="UP000008541">
    <property type="component" value="Chromosome"/>
</dbReference>
<dbReference type="GO" id="GO:0005829">
    <property type="term" value="C:cytosol"/>
    <property type="evidence" value="ECO:0007669"/>
    <property type="project" value="TreeGrafter"/>
</dbReference>
<dbReference type="GO" id="GO:0004056">
    <property type="term" value="F:argininosuccinate lyase activity"/>
    <property type="evidence" value="ECO:0007669"/>
    <property type="project" value="UniProtKB-UniRule"/>
</dbReference>
<dbReference type="GO" id="GO:0042450">
    <property type="term" value="P:arginine biosynthetic process via ornithine"/>
    <property type="evidence" value="ECO:0007669"/>
    <property type="project" value="InterPro"/>
</dbReference>
<dbReference type="GO" id="GO:0006526">
    <property type="term" value="P:L-arginine biosynthetic process"/>
    <property type="evidence" value="ECO:0007669"/>
    <property type="project" value="UniProtKB-UniRule"/>
</dbReference>
<dbReference type="CDD" id="cd01359">
    <property type="entry name" value="Argininosuccinate_lyase"/>
    <property type="match status" value="1"/>
</dbReference>
<dbReference type="FunFam" id="1.10.275.10:FF:000002">
    <property type="entry name" value="Argininosuccinate lyase"/>
    <property type="match status" value="1"/>
</dbReference>
<dbReference type="FunFam" id="1.10.40.30:FF:000001">
    <property type="entry name" value="Argininosuccinate lyase"/>
    <property type="match status" value="1"/>
</dbReference>
<dbReference type="FunFam" id="1.20.200.10:FF:000002">
    <property type="entry name" value="Argininosuccinate lyase"/>
    <property type="match status" value="1"/>
</dbReference>
<dbReference type="Gene3D" id="1.10.40.30">
    <property type="entry name" value="Fumarase/aspartase (C-terminal domain)"/>
    <property type="match status" value="1"/>
</dbReference>
<dbReference type="Gene3D" id="1.20.200.10">
    <property type="entry name" value="Fumarase/aspartase (Central domain)"/>
    <property type="match status" value="1"/>
</dbReference>
<dbReference type="Gene3D" id="1.10.275.10">
    <property type="entry name" value="Fumarase/aspartase (N-terminal domain)"/>
    <property type="match status" value="1"/>
</dbReference>
<dbReference type="HAMAP" id="MF_00006">
    <property type="entry name" value="Arg_succ_lyase"/>
    <property type="match status" value="1"/>
</dbReference>
<dbReference type="InterPro" id="IPR029419">
    <property type="entry name" value="Arg_succ_lyase_C"/>
</dbReference>
<dbReference type="InterPro" id="IPR009049">
    <property type="entry name" value="Argininosuccinate_lyase"/>
</dbReference>
<dbReference type="InterPro" id="IPR024083">
    <property type="entry name" value="Fumarase/histidase_N"/>
</dbReference>
<dbReference type="InterPro" id="IPR020557">
    <property type="entry name" value="Fumarate_lyase_CS"/>
</dbReference>
<dbReference type="InterPro" id="IPR000362">
    <property type="entry name" value="Fumarate_lyase_fam"/>
</dbReference>
<dbReference type="InterPro" id="IPR022761">
    <property type="entry name" value="Fumarate_lyase_N"/>
</dbReference>
<dbReference type="InterPro" id="IPR008948">
    <property type="entry name" value="L-Aspartase-like"/>
</dbReference>
<dbReference type="NCBIfam" id="TIGR00838">
    <property type="entry name" value="argH"/>
    <property type="match status" value="1"/>
</dbReference>
<dbReference type="PANTHER" id="PTHR43814">
    <property type="entry name" value="ARGININOSUCCINATE LYASE"/>
    <property type="match status" value="1"/>
</dbReference>
<dbReference type="PANTHER" id="PTHR43814:SF1">
    <property type="entry name" value="ARGININOSUCCINATE LYASE"/>
    <property type="match status" value="1"/>
</dbReference>
<dbReference type="Pfam" id="PF14698">
    <property type="entry name" value="ASL_C2"/>
    <property type="match status" value="1"/>
</dbReference>
<dbReference type="Pfam" id="PF00206">
    <property type="entry name" value="Lyase_1"/>
    <property type="match status" value="1"/>
</dbReference>
<dbReference type="PRINTS" id="PR00145">
    <property type="entry name" value="ARGSUCLYASE"/>
</dbReference>
<dbReference type="PRINTS" id="PR00149">
    <property type="entry name" value="FUMRATELYASE"/>
</dbReference>
<dbReference type="SUPFAM" id="SSF48557">
    <property type="entry name" value="L-aspartase-like"/>
    <property type="match status" value="1"/>
</dbReference>
<dbReference type="PROSITE" id="PS00163">
    <property type="entry name" value="FUMARATE_LYASES"/>
    <property type="match status" value="1"/>
</dbReference>
<sequence>MKLWGGRFKEEESKLMEDFNSSLSFDKKLYYEDIRGSIAHVKMLANQNIIKEEEKEKILLGLEEILKEIDEGILKIEGDYEDIHSFVEINLINKIGNVGKKLHTGRSRNDQVALDMKLYAKKSTEEVIECLKELMDSLIKVGNENNYIMPGYTHLQRAQVVTFRYHLLAYFEMFKRDEKRLKNALEILNESPLGSGALAGSTYSIDREYTAKLLGFRKPVDNFLDGVSDRDYIIELISKFSIIMMHLSRLSEELILWSSSEFRFIQIGDAYSTGSSIMPQKKNPDGAELIRGKTGRVYGDLIGILTVMKSLPLAYNKDMQEDKEPFFDAKDTVISCLKVMEGIISTLKVNKENLMKSVKKGFLNATEAADYLVNKGMAFRDAHKVIGEIVIYCEDKNSAIEDLSLEELKQFSDLFCEDIYGFIDYKSSINKGIKKEMGYS</sequence>
<proteinExistence type="inferred from homology"/>
<accession>B1IK07</accession>
<gene>
    <name evidence="1" type="primary">argH</name>
    <name type="ordered locus">CLD_1895</name>
</gene>